<gene>
    <name type="ordered locus">jhp_0355</name>
</gene>
<sequence>MRSCKQIFDKGLKPYYKHSVCLKPFFRFCFLKIHAYQQRYRAFALTLFSCKFFNACKIFIPIIDFKIVFIPILKHQAKLKRVSNAY</sequence>
<proteinExistence type="predicted"/>
<organism>
    <name type="scientific">Helicobacter pylori (strain J99 / ATCC 700824)</name>
    <name type="common">Campylobacter pylori J99</name>
    <dbReference type="NCBI Taxonomy" id="85963"/>
    <lineage>
        <taxon>Bacteria</taxon>
        <taxon>Pseudomonadati</taxon>
        <taxon>Campylobacterota</taxon>
        <taxon>Epsilonproteobacteria</taxon>
        <taxon>Campylobacterales</taxon>
        <taxon>Helicobacteraceae</taxon>
        <taxon>Helicobacter</taxon>
    </lineage>
</organism>
<accession>Q9ZM67</accession>
<feature type="chain" id="PRO_0000128697" description="Uncharacterized protein jhp_0355">
    <location>
        <begin position="1"/>
        <end position="86"/>
    </location>
</feature>
<protein>
    <recommendedName>
        <fullName>Uncharacterized protein jhp_0355</fullName>
    </recommendedName>
</protein>
<name>YA70_HELPJ</name>
<reference key="1">
    <citation type="journal article" date="1999" name="Nature">
        <title>Genomic sequence comparison of two unrelated isolates of the human gastric pathogen Helicobacter pylori.</title>
        <authorList>
            <person name="Alm R.A."/>
            <person name="Ling L.-S.L."/>
            <person name="Moir D.T."/>
            <person name="King B.L."/>
            <person name="Brown E.D."/>
            <person name="Doig P.C."/>
            <person name="Smith D.R."/>
            <person name="Noonan B."/>
            <person name="Guild B.C."/>
            <person name="deJonge B.L."/>
            <person name="Carmel G."/>
            <person name="Tummino P.J."/>
            <person name="Caruso A."/>
            <person name="Uria-Nickelsen M."/>
            <person name="Mills D.M."/>
            <person name="Ives C."/>
            <person name="Gibson R."/>
            <person name="Merberg D."/>
            <person name="Mills S.D."/>
            <person name="Jiang Q."/>
            <person name="Taylor D.E."/>
            <person name="Vovis G.F."/>
            <person name="Trust T.J."/>
        </authorList>
    </citation>
    <scope>NUCLEOTIDE SEQUENCE [LARGE SCALE GENOMIC DNA]</scope>
    <source>
        <strain>J99 / ATCC 700824</strain>
    </source>
</reference>
<dbReference type="EMBL" id="AE001439">
    <property type="protein sequence ID" value="AAD05933.1"/>
    <property type="molecule type" value="Genomic_DNA"/>
</dbReference>
<dbReference type="PIR" id="C71941">
    <property type="entry name" value="C71941"/>
</dbReference>
<dbReference type="RefSeq" id="WP_001255694.1">
    <property type="nucleotide sequence ID" value="NZ_CP011330.1"/>
</dbReference>
<dbReference type="KEGG" id="hpj:jhp_0355"/>
<dbReference type="PATRIC" id="fig|85963.30.peg.656"/>
<dbReference type="Proteomes" id="UP000000804">
    <property type="component" value="Chromosome"/>
</dbReference>